<evidence type="ECO:0000250" key="1"/>
<evidence type="ECO:0000250" key="2">
    <source>
        <dbReference type="UniProtKB" id="P23677"/>
    </source>
</evidence>
<evidence type="ECO:0000250" key="3">
    <source>
        <dbReference type="UniProtKB" id="Q8R071"/>
    </source>
</evidence>
<evidence type="ECO:0000256" key="4">
    <source>
        <dbReference type="SAM" id="MobiDB-lite"/>
    </source>
</evidence>
<evidence type="ECO:0000269" key="5">
    <source>
    </source>
</evidence>
<evidence type="ECO:0000305" key="6"/>
<evidence type="ECO:0000312" key="7">
    <source>
        <dbReference type="RGD" id="619950"/>
    </source>
</evidence>
<evidence type="ECO:0007744" key="8">
    <source>
    </source>
</evidence>
<evidence type="ECO:0007829" key="9">
    <source>
        <dbReference type="PDB" id="1TZD"/>
    </source>
</evidence>
<dbReference type="EC" id="2.7.1.127" evidence="2"/>
<dbReference type="EMBL" id="X56917">
    <property type="protein sequence ID" value="CAA40248.1"/>
    <property type="molecule type" value="mRNA"/>
</dbReference>
<dbReference type="EMBL" id="M29787">
    <property type="protein sequence ID" value="AAA41457.1"/>
    <property type="status" value="ALT_INIT"/>
    <property type="molecule type" value="mRNA"/>
</dbReference>
<dbReference type="PIR" id="S13064">
    <property type="entry name" value="S13064"/>
</dbReference>
<dbReference type="RefSeq" id="NP_112307.2">
    <property type="nucleotide sequence ID" value="NM_031045.2"/>
</dbReference>
<dbReference type="PDB" id="1TZD">
    <property type="method" value="X-ray"/>
    <property type="resolution" value="2.20 A"/>
    <property type="chains" value="A/B=185-459"/>
</dbReference>
<dbReference type="PDB" id="9GOB">
    <property type="method" value="EM"/>
    <property type="resolution" value="3.20 A"/>
    <property type="chains" value="F=10-52"/>
</dbReference>
<dbReference type="PDB" id="9HM9">
    <property type="method" value="EM"/>
    <property type="resolution" value="3.40 A"/>
    <property type="chains" value="F=26-47"/>
</dbReference>
<dbReference type="PDBsum" id="1TZD"/>
<dbReference type="PDBsum" id="9GOB"/>
<dbReference type="PDBsum" id="9HM9"/>
<dbReference type="EMDB" id="EMD-51496"/>
<dbReference type="EMDB" id="EMD-52289"/>
<dbReference type="SMR" id="P17105"/>
<dbReference type="BioGRID" id="249574">
    <property type="interactions" value="3"/>
</dbReference>
<dbReference type="FunCoup" id="P17105">
    <property type="interactions" value="374"/>
</dbReference>
<dbReference type="STRING" id="10116.ENSRNOP00000007247"/>
<dbReference type="BindingDB" id="P17105"/>
<dbReference type="ChEMBL" id="CHEMBL3261"/>
<dbReference type="iPTMnet" id="P17105"/>
<dbReference type="PhosphoSitePlus" id="P17105"/>
<dbReference type="PaxDb" id="10116-ENSRNOP00000007247"/>
<dbReference type="Ensembl" id="ENSRNOT00000007247.4">
    <property type="protein sequence ID" value="ENSRNOP00000007247.1"/>
    <property type="gene ID" value="ENSRNOG00000005284.4"/>
</dbReference>
<dbReference type="GeneID" id="81677"/>
<dbReference type="KEGG" id="rno:81677"/>
<dbReference type="UCSC" id="RGD:619950">
    <property type="organism name" value="rat"/>
</dbReference>
<dbReference type="AGR" id="RGD:619950"/>
<dbReference type="CTD" id="3706"/>
<dbReference type="RGD" id="619950">
    <property type="gene designation" value="Itpka"/>
</dbReference>
<dbReference type="eggNOG" id="KOG1621">
    <property type="taxonomic scope" value="Eukaryota"/>
</dbReference>
<dbReference type="GeneTree" id="ENSGT00940000161350"/>
<dbReference type="HOGENOM" id="CLU_017767_1_1_1"/>
<dbReference type="InParanoid" id="P17105"/>
<dbReference type="OMA" id="FQVFVEF"/>
<dbReference type="OrthoDB" id="338650at2759"/>
<dbReference type="PhylomeDB" id="P17105"/>
<dbReference type="TreeFam" id="TF318394"/>
<dbReference type="BRENDA" id="2.7.1.127">
    <property type="organism ID" value="5301"/>
</dbReference>
<dbReference type="Reactome" id="R-RNO-1855204">
    <property type="pathway name" value="Synthesis of IP3 and IP4 in the cytosol"/>
</dbReference>
<dbReference type="SABIO-RK" id="P17105"/>
<dbReference type="EvolutionaryTrace" id="P17105"/>
<dbReference type="PRO" id="PR:P17105"/>
<dbReference type="Proteomes" id="UP000002494">
    <property type="component" value="Chromosome 3"/>
</dbReference>
<dbReference type="Bgee" id="ENSRNOG00000005284">
    <property type="expression patterns" value="Expressed in Ammon's horn and 17 other cell types or tissues"/>
</dbReference>
<dbReference type="GO" id="GO:0005737">
    <property type="term" value="C:cytoplasm"/>
    <property type="evidence" value="ECO:0000318"/>
    <property type="project" value="GO_Central"/>
</dbReference>
<dbReference type="GO" id="GO:0005856">
    <property type="term" value="C:cytoskeleton"/>
    <property type="evidence" value="ECO:0000250"/>
    <property type="project" value="UniProtKB"/>
</dbReference>
<dbReference type="GO" id="GO:0043197">
    <property type="term" value="C:dendritic spine"/>
    <property type="evidence" value="ECO:0000314"/>
    <property type="project" value="MGI"/>
</dbReference>
<dbReference type="GO" id="GO:0098978">
    <property type="term" value="C:glutamatergic synapse"/>
    <property type="evidence" value="ECO:0000314"/>
    <property type="project" value="SynGO"/>
</dbReference>
<dbReference type="GO" id="GO:0005634">
    <property type="term" value="C:nucleus"/>
    <property type="evidence" value="ECO:0000318"/>
    <property type="project" value="GO_Central"/>
</dbReference>
<dbReference type="GO" id="GO:0098871">
    <property type="term" value="C:postsynaptic actin cytoskeleton"/>
    <property type="evidence" value="ECO:0000314"/>
    <property type="project" value="SynGO"/>
</dbReference>
<dbReference type="GO" id="GO:0005524">
    <property type="term" value="F:ATP binding"/>
    <property type="evidence" value="ECO:0007669"/>
    <property type="project" value="UniProtKB-KW"/>
</dbReference>
<dbReference type="GO" id="GO:0004683">
    <property type="term" value="F:calcium/calmodulin-dependent protein kinase activity"/>
    <property type="evidence" value="ECO:0000314"/>
    <property type="project" value="RGD"/>
</dbReference>
<dbReference type="GO" id="GO:0005516">
    <property type="term" value="F:calmodulin binding"/>
    <property type="evidence" value="ECO:0007669"/>
    <property type="project" value="UniProtKB-KW"/>
</dbReference>
<dbReference type="GO" id="GO:0000828">
    <property type="term" value="F:inositol hexakisphosphate kinase activity"/>
    <property type="evidence" value="ECO:0000318"/>
    <property type="project" value="GO_Central"/>
</dbReference>
<dbReference type="GO" id="GO:0008440">
    <property type="term" value="F:inositol-1,4,5-trisphosphate 3-kinase activity"/>
    <property type="evidence" value="ECO:0000314"/>
    <property type="project" value="RGD"/>
</dbReference>
<dbReference type="GO" id="GO:0031267">
    <property type="term" value="F:small GTPase binding"/>
    <property type="evidence" value="ECO:0000314"/>
    <property type="project" value="MGI"/>
</dbReference>
<dbReference type="GO" id="GO:0030036">
    <property type="term" value="P:actin cytoskeleton organization"/>
    <property type="evidence" value="ECO:0000315"/>
    <property type="project" value="MGI"/>
</dbReference>
<dbReference type="GO" id="GO:0071277">
    <property type="term" value="P:cellular response to calcium ion"/>
    <property type="evidence" value="ECO:0000250"/>
    <property type="project" value="UniProtKB"/>
</dbReference>
<dbReference type="GO" id="GO:0097062">
    <property type="term" value="P:dendritic spine maintenance"/>
    <property type="evidence" value="ECO:0000315"/>
    <property type="project" value="MGI"/>
</dbReference>
<dbReference type="GO" id="GO:0006020">
    <property type="term" value="P:inositol metabolic process"/>
    <property type="evidence" value="ECO:0000266"/>
    <property type="project" value="RGD"/>
</dbReference>
<dbReference type="GO" id="GO:0032958">
    <property type="term" value="P:inositol phosphate biosynthetic process"/>
    <property type="evidence" value="ECO:0000318"/>
    <property type="project" value="GO_Central"/>
</dbReference>
<dbReference type="GO" id="GO:0098885">
    <property type="term" value="P:modification of postsynaptic actin cytoskeleton"/>
    <property type="evidence" value="ECO:0000314"/>
    <property type="project" value="SynGO"/>
</dbReference>
<dbReference type="GO" id="GO:0046854">
    <property type="term" value="P:phosphatidylinositol phosphate biosynthetic process"/>
    <property type="evidence" value="ECO:0000250"/>
    <property type="project" value="UniProtKB"/>
</dbReference>
<dbReference type="GO" id="GO:0061003">
    <property type="term" value="P:positive regulation of dendritic spine morphogenesis"/>
    <property type="evidence" value="ECO:0000315"/>
    <property type="project" value="MGI"/>
</dbReference>
<dbReference type="GO" id="GO:0048167">
    <property type="term" value="P:regulation of synaptic plasticity"/>
    <property type="evidence" value="ECO:0000266"/>
    <property type="project" value="RGD"/>
</dbReference>
<dbReference type="GO" id="GO:0051592">
    <property type="term" value="P:response to calcium ion"/>
    <property type="evidence" value="ECO:0000250"/>
    <property type="project" value="UniProtKB"/>
</dbReference>
<dbReference type="DisProt" id="DP02461"/>
<dbReference type="FunFam" id="3.30.470.160:FF:000001">
    <property type="entry name" value="Kinase"/>
    <property type="match status" value="1"/>
</dbReference>
<dbReference type="Gene3D" id="3.30.470.160">
    <property type="entry name" value="Inositol polyphosphate kinase"/>
    <property type="match status" value="1"/>
</dbReference>
<dbReference type="InterPro" id="IPR005522">
    <property type="entry name" value="IPK"/>
</dbReference>
<dbReference type="InterPro" id="IPR038286">
    <property type="entry name" value="IPK_sf"/>
</dbReference>
<dbReference type="PANTHER" id="PTHR12400">
    <property type="entry name" value="INOSITOL POLYPHOSPHATE KINASE"/>
    <property type="match status" value="1"/>
</dbReference>
<dbReference type="PANTHER" id="PTHR12400:SF55">
    <property type="entry name" value="INOSITOL-TRISPHOSPHATE 3-KINASE A"/>
    <property type="match status" value="1"/>
</dbReference>
<dbReference type="Pfam" id="PF03770">
    <property type="entry name" value="IPK"/>
    <property type="match status" value="1"/>
</dbReference>
<dbReference type="SUPFAM" id="SSF56104">
    <property type="entry name" value="SAICAR synthase-like"/>
    <property type="match status" value="1"/>
</dbReference>
<reference key="1">
    <citation type="journal article" date="1990" name="Biochem. J.">
        <title>Cloning and expression in Escherichia coli of a rat brain cDNA encoding a Ca2+/calmodulin-sensitive inositol 1,4,5-trisphosphate 3-kinase.</title>
        <authorList>
            <person name="Takazawa K."/>
            <person name="Vandekerckhove J."/>
            <person name="Dumont J.E."/>
            <person name="Erneux C."/>
        </authorList>
    </citation>
    <scope>NUCLEOTIDE SEQUENCE [MRNA]</scope>
</reference>
<reference key="2">
    <citation type="journal article" date="1990" name="Science">
        <title>Molecular cloning and expression of a complementary DNA for inositol 1,4,5-trisphosphate 3-kinase.</title>
        <authorList>
            <person name="Choi K.Y."/>
            <person name="Kim H.K."/>
            <person name="Lee S.Y."/>
            <person name="Moon K.H."/>
            <person name="Sim S.S."/>
            <person name="Kim J.W."/>
            <person name="Chung H.K."/>
            <person name="Rhee S.G."/>
        </authorList>
    </citation>
    <scope>NUCLEOTIDE SEQUENCE [MRNA]</scope>
    <scope>PARTIAL PROTEIN SEQUENCE</scope>
    <source>
        <tissue>Brain</tissue>
    </source>
</reference>
<reference key="3">
    <citation type="journal article" date="1995" name="Biochem. J.">
        <title>Active site labelling of inositol 1,4,5-trisphosphate 3-kinase A by phenylglyoxal.</title>
        <authorList>
            <person name="Communi D."/>
            <person name="Lecocq R."/>
            <person name="Vanweyenberg V."/>
            <person name="Erneux C."/>
        </authorList>
    </citation>
    <scope>PROTEIN SEQUENCE OF 315-326</scope>
    <scope>CATALYTIC ACTIVITY</scope>
    <scope>INHIBITION BY CHEMICAL MODIFICATION</scope>
</reference>
<reference key="4">
    <citation type="journal article" date="2012" name="Nat. Commun.">
        <title>Quantitative maps of protein phosphorylation sites across 14 different rat organs and tissues.</title>
        <authorList>
            <person name="Lundby A."/>
            <person name="Secher A."/>
            <person name="Lage K."/>
            <person name="Nordsborg N.B."/>
            <person name="Dmytriyev A."/>
            <person name="Lundby C."/>
            <person name="Olsen J.V."/>
        </authorList>
    </citation>
    <scope>PHOSPHORYLATION [LARGE SCALE ANALYSIS] AT SER-135</scope>
    <scope>IDENTIFICATION BY MASS SPECTROMETRY [LARGE SCALE ANALYSIS]</scope>
</reference>
<reference key="5">
    <citation type="journal article" date="2004" name="Mol. Cell">
        <title>Crystal structure of the catalytic core of inositol 1,4,5-trisphosphate 3-kinase.</title>
        <authorList>
            <person name="Miller G.J."/>
            <person name="Hurley J.H."/>
        </authorList>
    </citation>
    <scope>X-RAY CRYSTALLOGRAPHY (2.2 ANGSTROMS) OF 185-459 IN COMPLEX WITH ADP</scope>
</reference>
<sequence>MTLPGHPTGMARPRGAGPCSPGLERAPRRSVGELRLLFEARCAAVAAAAAAGEPRARGAKRRGGQVPNGLPRAAPAPVIPQLTVTSEEDVAPASPGPPDREGNWLPAAGSHLQQPRRLSTSSLSSTGSSSLLEDSEDDLLSDSESRSRGNVQLETSEDVGQKSHWQKIRTMVNLPVMSPFKKRYSWVQLAGHTGSFKAAGTSGLILKRSSEPEHYCLVRLMADVLRGCVPAFHGVVERDGESYLQLQDLLDGFDGPCVLDCKMGVRTYLEEELTKARERPKLRKDMYKKMLAVDPEAPTEEEHAQRAVTKPRYMQWREGISSSTTLGFRIEGIKKADGSCSTDFKTTRSREQVTRVFEEFMQGDAEVLKRYLNRLQQIRDTLEISDFFRRHEVIGSSLLFVHDHCHRAGVWLIDFGKTTPLPDGQILDHRRPWEEGNREDGYLLGLDNLIGILANLAER</sequence>
<feature type="chain" id="PRO_0000066867" description="Inositol-trisphosphate 3-kinase A">
    <location>
        <begin position="1"/>
        <end position="459"/>
    </location>
</feature>
<feature type="region of interest" description="Disordered" evidence="4">
    <location>
        <begin position="1"/>
        <end position="26"/>
    </location>
</feature>
<feature type="region of interest" description="Disordered" evidence="4">
    <location>
        <begin position="49"/>
        <end position="164"/>
    </location>
</feature>
<feature type="region of interest" description="Calmodulin-binding">
    <location>
        <begin position="285"/>
        <end position="293"/>
    </location>
</feature>
<feature type="compositionally biased region" description="Low complexity" evidence="4">
    <location>
        <begin position="116"/>
        <end position="132"/>
    </location>
</feature>
<feature type="binding site" evidence="1">
    <location>
        <position position="195"/>
    </location>
    <ligand>
        <name>ATP</name>
        <dbReference type="ChEBI" id="CHEBI:30616"/>
    </ligand>
</feature>
<feature type="binding site">
    <location>
        <position position="207"/>
    </location>
    <ligand>
        <name>ATP</name>
        <dbReference type="ChEBI" id="CHEBI:30616"/>
    </ligand>
</feature>
<feature type="binding site">
    <location>
        <begin position="247"/>
        <end position="249"/>
    </location>
    <ligand>
        <name>ATP</name>
        <dbReference type="ChEBI" id="CHEBI:30616"/>
    </ligand>
</feature>
<feature type="binding site">
    <location>
        <position position="260"/>
    </location>
    <ligand>
        <name>ATP</name>
        <dbReference type="ChEBI" id="CHEBI:30616"/>
    </ligand>
</feature>
<feature type="binding site" evidence="1">
    <location>
        <position position="262"/>
    </location>
    <ligand>
        <name>substrate</name>
    </ligand>
</feature>
<feature type="binding site" evidence="1">
    <location>
        <position position="283"/>
    </location>
    <ligand>
        <name>substrate</name>
    </ligand>
</feature>
<feature type="binding site" evidence="1">
    <location>
        <begin position="310"/>
        <end position="317"/>
    </location>
    <ligand>
        <name>substrate</name>
    </ligand>
</feature>
<feature type="binding site" evidence="1">
    <location>
        <position position="334"/>
    </location>
    <ligand>
        <name>ATP</name>
        <dbReference type="ChEBI" id="CHEBI:30616"/>
    </ligand>
</feature>
<feature type="binding site">
    <location>
        <position position="414"/>
    </location>
    <ligand>
        <name>ATP</name>
        <dbReference type="ChEBI" id="CHEBI:30616"/>
    </ligand>
</feature>
<feature type="binding site" evidence="1">
    <location>
        <position position="417"/>
    </location>
    <ligand>
        <name>substrate</name>
    </ligand>
</feature>
<feature type="modified residue" description="Omega-N-methylarginine" evidence="3">
    <location>
        <position position="35"/>
    </location>
</feature>
<feature type="modified residue" description="Omega-N-methylarginine" evidence="3">
    <location>
        <position position="55"/>
    </location>
</feature>
<feature type="modified residue" description="Omega-N-methylarginine" evidence="3">
    <location>
        <position position="62"/>
    </location>
</feature>
<feature type="modified residue" description="Phosphoserine" evidence="8">
    <location>
        <position position="135"/>
    </location>
</feature>
<feature type="modified residue" description="Phosphoserine" evidence="2">
    <location>
        <position position="195"/>
    </location>
</feature>
<feature type="strand" evidence="9">
    <location>
        <begin position="204"/>
        <end position="206"/>
    </location>
</feature>
<feature type="helix" evidence="9">
    <location>
        <begin position="211"/>
        <end position="220"/>
    </location>
</feature>
<feature type="helix" evidence="9">
    <location>
        <begin position="224"/>
        <end position="228"/>
    </location>
</feature>
<feature type="strand" evidence="9">
    <location>
        <begin position="245"/>
        <end position="247"/>
    </location>
</feature>
<feature type="turn" evidence="9">
    <location>
        <begin position="249"/>
        <end position="252"/>
    </location>
</feature>
<feature type="strand" evidence="9">
    <location>
        <begin position="257"/>
        <end position="261"/>
    </location>
</feature>
<feature type="helix" evidence="9">
    <location>
        <begin position="270"/>
        <end position="278"/>
    </location>
</feature>
<feature type="helix" evidence="9">
    <location>
        <begin position="286"/>
        <end position="289"/>
    </location>
</feature>
<feature type="helix" evidence="9">
    <location>
        <begin position="299"/>
        <end position="303"/>
    </location>
</feature>
<feature type="helix" evidence="9">
    <location>
        <begin position="312"/>
        <end position="320"/>
    </location>
</feature>
<feature type="turn" evidence="9">
    <location>
        <begin position="323"/>
        <end position="325"/>
    </location>
</feature>
<feature type="strand" evidence="9">
    <location>
        <begin position="330"/>
        <end position="334"/>
    </location>
</feature>
<feature type="strand" evidence="9">
    <location>
        <begin position="336"/>
        <end position="338"/>
    </location>
</feature>
<feature type="helix" evidence="9">
    <location>
        <begin position="350"/>
        <end position="361"/>
    </location>
</feature>
<feature type="helix" evidence="9">
    <location>
        <begin position="365"/>
        <end position="382"/>
    </location>
</feature>
<feature type="helix" evidence="9">
    <location>
        <begin position="386"/>
        <end position="389"/>
    </location>
</feature>
<feature type="strand" evidence="9">
    <location>
        <begin position="397"/>
        <end position="402"/>
    </location>
</feature>
<feature type="strand" evidence="9">
    <location>
        <begin position="408"/>
        <end position="413"/>
    </location>
</feature>
<feature type="strand" evidence="9">
    <location>
        <begin position="429"/>
        <end position="431"/>
    </location>
</feature>
<feature type="helix" evidence="9">
    <location>
        <begin position="442"/>
        <end position="456"/>
    </location>
</feature>
<name>IP3KA_RAT</name>
<protein>
    <recommendedName>
        <fullName>Inositol-trisphosphate 3-kinase A</fullName>
        <ecNumber evidence="2">2.7.1.127</ecNumber>
    </recommendedName>
    <alternativeName>
        <fullName>Inositol 1,4,5-trisphosphate 3-kinase A</fullName>
        <shortName>IP3 3-kinase A</shortName>
        <shortName>IP3K A</shortName>
        <shortName>InsP 3-kinase A</shortName>
    </alternativeName>
</protein>
<keyword id="KW-0002">3D-structure</keyword>
<keyword id="KW-0067">ATP-binding</keyword>
<keyword id="KW-0112">Calmodulin-binding</keyword>
<keyword id="KW-0963">Cytoplasm</keyword>
<keyword id="KW-0206">Cytoskeleton</keyword>
<keyword id="KW-0903">Direct protein sequencing</keyword>
<keyword id="KW-0418">Kinase</keyword>
<keyword id="KW-0488">Methylation</keyword>
<keyword id="KW-0547">Nucleotide-binding</keyword>
<keyword id="KW-0597">Phosphoprotein</keyword>
<keyword id="KW-1185">Reference proteome</keyword>
<keyword id="KW-0808">Transferase</keyword>
<organism>
    <name type="scientific">Rattus norvegicus</name>
    <name type="common">Rat</name>
    <dbReference type="NCBI Taxonomy" id="10116"/>
    <lineage>
        <taxon>Eukaryota</taxon>
        <taxon>Metazoa</taxon>
        <taxon>Chordata</taxon>
        <taxon>Craniata</taxon>
        <taxon>Vertebrata</taxon>
        <taxon>Euteleostomi</taxon>
        <taxon>Mammalia</taxon>
        <taxon>Eutheria</taxon>
        <taxon>Euarchontoglires</taxon>
        <taxon>Glires</taxon>
        <taxon>Rodentia</taxon>
        <taxon>Myomorpha</taxon>
        <taxon>Muroidea</taxon>
        <taxon>Muridae</taxon>
        <taxon>Murinae</taxon>
        <taxon>Rattus</taxon>
    </lineage>
</organism>
<proteinExistence type="evidence at protein level"/>
<accession>P17105</accession>
<gene>
    <name evidence="7" type="primary">Itpka</name>
</gene>
<comment type="function">
    <text evidence="5">Catalyzes the phosphorylation of 1D-myo-inositol 1,4,5-trisphosphate (InsP3) into 1D-myo-inositol 1,3,4,5-tetrakisphosphate and participates to the regulation of calcium homeostasis.</text>
</comment>
<comment type="catalytic activity">
    <reaction evidence="5">
        <text>1D-myo-inositol 1,4,5-trisphosphate + ATP = 1D-myo-inositol 1,3,4,5-tetrakisphosphate + ADP + H(+)</text>
        <dbReference type="Rhea" id="RHEA:11020"/>
        <dbReference type="ChEBI" id="CHEBI:15378"/>
        <dbReference type="ChEBI" id="CHEBI:30616"/>
        <dbReference type="ChEBI" id="CHEBI:57895"/>
        <dbReference type="ChEBI" id="CHEBI:203600"/>
        <dbReference type="ChEBI" id="CHEBI:456216"/>
        <dbReference type="EC" id="2.7.1.127"/>
    </reaction>
    <physiologicalReaction direction="left-to-right" evidence="5">
        <dbReference type="Rhea" id="RHEA:11021"/>
    </physiologicalReaction>
</comment>
<comment type="activity regulation">
    <text evidence="2">Activated by calcium/calmodulin.</text>
</comment>
<comment type="subcellular location">
    <subcellularLocation>
        <location evidence="2">Cytoplasm</location>
        <location evidence="2">Cytoskeleton</location>
    </subcellularLocation>
</comment>
<comment type="similarity">
    <text evidence="6">Belongs to the inositol phosphokinase (IPK) family.</text>
</comment>
<comment type="sequence caution" evidence="6">
    <conflict type="erroneous initiation">
        <sequence resource="EMBL-CDS" id="AAA41457"/>
    </conflict>
    <text>Truncated N-terminus.</text>
</comment>